<protein>
    <recommendedName>
        <fullName evidence="5">Protein seu-1</fullName>
    </recommendedName>
    <alternativeName>
        <fullName evidence="10">Suppressor of ectopic unc-5</fullName>
    </alternativeName>
</protein>
<reference evidence="6" key="1">
    <citation type="journal article" date="1998" name="Science">
        <title>Genome sequence of the nematode C. elegans: a platform for investigating biology.</title>
        <authorList>
            <consortium name="The C. elegans sequencing consortium"/>
        </authorList>
    </citation>
    <scope>NUCLEOTIDE SEQUENCE [LARGE SCALE GENOMIC DNA]</scope>
    <source>
        <strain evidence="6">Bristol N2</strain>
    </source>
</reference>
<reference evidence="5" key="2">
    <citation type="journal article" date="1998" name="Dev. Biol.">
        <title>Suppressors of ectopic UNC-5 growth cone steering identify eight genes involved in axon guidance in Caenorhabditis elegans.</title>
        <authorList>
            <person name="Colavita A."/>
            <person name="Culotti J.G."/>
        </authorList>
    </citation>
    <scope>FUNCTION</scope>
    <scope>MUTAGENESIS OF 191-ARG--LEU-672</scope>
</reference>
<reference evidence="5" key="3">
    <citation type="journal article" date="2007" name="Dev. Biol.">
        <title>C. elegans seu-1 encodes novel nuclear proteins that regulate responses to UNC-6/netrin guidance cues.</title>
        <authorList>
            <person name="Zheng H."/>
            <person name="Coudiere L."/>
            <person name="Camia C."/>
            <person name="Colavita A."/>
            <person name="Culotti J.G."/>
            <person name="Merz D.C."/>
        </authorList>
    </citation>
    <scope>FUNCTION</scope>
    <scope>SUBCELLULAR LOCATION</scope>
    <scope>TISSUE SPECIFICITY</scope>
    <scope>DEVELOPMENTAL STAGE</scope>
    <scope>MUTAGENESIS OF 191-ARG--LEU-672 AND 630-GLN--LEU-672</scope>
</reference>
<accession>A9D2P7</accession>
<accession>H2L0L8</accession>
<accession>H2L0L9</accession>
<accession>Q8IU02</accession>
<accession>V6CLR5</accession>
<evidence type="ECO:0000256" key="1">
    <source>
        <dbReference type="SAM" id="MobiDB-lite"/>
    </source>
</evidence>
<evidence type="ECO:0000269" key="2">
    <source>
    </source>
</evidence>
<evidence type="ECO:0000269" key="3">
    <source>
    </source>
</evidence>
<evidence type="ECO:0000303" key="4">
    <source>
    </source>
</evidence>
<evidence type="ECO:0000305" key="5"/>
<evidence type="ECO:0000312" key="6">
    <source>
        <dbReference type="Proteomes" id="UP000001940"/>
    </source>
</evidence>
<evidence type="ECO:0000312" key="7">
    <source>
        <dbReference type="WormBase" id="Y73B6BL.5a"/>
    </source>
</evidence>
<evidence type="ECO:0000312" key="8">
    <source>
        <dbReference type="WormBase" id="Y73B6BL.5b"/>
    </source>
</evidence>
<evidence type="ECO:0000312" key="9">
    <source>
        <dbReference type="WormBase" id="Y73B6BL.5c"/>
    </source>
</evidence>
<evidence type="ECO:0000312" key="10">
    <source>
        <dbReference type="WormBase" id="Y73B6BL.5d"/>
    </source>
</evidence>
<evidence type="ECO:0000312" key="11">
    <source>
        <dbReference type="WormBase" id="Y73B6BL.5e"/>
    </source>
</evidence>
<feature type="chain" id="PRO_0000453731" description="Protein seu-1">
    <location>
        <begin position="1"/>
        <end position="672"/>
    </location>
</feature>
<feature type="region of interest" description="Disordered" evidence="1">
    <location>
        <begin position="1"/>
        <end position="463"/>
    </location>
</feature>
<feature type="region of interest" description="Disordered" evidence="1">
    <location>
        <begin position="576"/>
        <end position="672"/>
    </location>
</feature>
<feature type="compositionally biased region" description="Basic and acidic residues" evidence="1">
    <location>
        <begin position="8"/>
        <end position="20"/>
    </location>
</feature>
<feature type="compositionally biased region" description="Gly residues" evidence="1">
    <location>
        <begin position="25"/>
        <end position="34"/>
    </location>
</feature>
<feature type="compositionally biased region" description="Basic and acidic residues" evidence="1">
    <location>
        <begin position="62"/>
        <end position="85"/>
    </location>
</feature>
<feature type="compositionally biased region" description="Low complexity" evidence="1">
    <location>
        <begin position="87"/>
        <end position="105"/>
    </location>
</feature>
<feature type="compositionally biased region" description="Basic and acidic residues" evidence="1">
    <location>
        <begin position="107"/>
        <end position="138"/>
    </location>
</feature>
<feature type="compositionally biased region" description="Basic and acidic residues" evidence="1">
    <location>
        <begin position="189"/>
        <end position="226"/>
    </location>
</feature>
<feature type="compositionally biased region" description="Basic and acidic residues" evidence="1">
    <location>
        <begin position="234"/>
        <end position="268"/>
    </location>
</feature>
<feature type="compositionally biased region" description="Basic and acidic residues" evidence="1">
    <location>
        <begin position="289"/>
        <end position="306"/>
    </location>
</feature>
<feature type="compositionally biased region" description="Low complexity" evidence="1">
    <location>
        <begin position="307"/>
        <end position="317"/>
    </location>
</feature>
<feature type="compositionally biased region" description="Acidic residues" evidence="1">
    <location>
        <begin position="322"/>
        <end position="343"/>
    </location>
</feature>
<feature type="compositionally biased region" description="Basic and acidic residues" evidence="1">
    <location>
        <begin position="366"/>
        <end position="375"/>
    </location>
</feature>
<feature type="compositionally biased region" description="Basic and acidic residues" evidence="1">
    <location>
        <begin position="382"/>
        <end position="396"/>
    </location>
</feature>
<feature type="compositionally biased region" description="Basic and acidic residues" evidence="1">
    <location>
        <begin position="410"/>
        <end position="424"/>
    </location>
</feature>
<feature type="compositionally biased region" description="Basic and acidic residues" evidence="1">
    <location>
        <begin position="436"/>
        <end position="447"/>
    </location>
</feature>
<feature type="compositionally biased region" description="Basic and acidic residues" evidence="1">
    <location>
        <begin position="607"/>
        <end position="626"/>
    </location>
</feature>
<feature type="compositionally biased region" description="Basic and acidic residues" evidence="1">
    <location>
        <begin position="636"/>
        <end position="659"/>
    </location>
</feature>
<feature type="splice variant" id="VSP_061192" description="In isoform c and isoform e." evidence="5">
    <location>
        <begin position="1"/>
        <end position="180"/>
    </location>
</feature>
<feature type="splice variant" id="VSP_061193" description="In isoform b." evidence="5">
    <location>
        <begin position="88"/>
        <end position="132"/>
    </location>
</feature>
<feature type="splice variant" id="VSP_061194" description="In isoform a, isoform b and isoform c." evidence="5">
    <location>
        <begin position="461"/>
        <end position="576"/>
    </location>
</feature>
<feature type="splice variant" id="VSP_061195" description="In isoform a, isoform b, isoform c and isoform e." evidence="5">
    <original>VSLSLKHL</original>
    <variation>RRRPSPPRGRPGEKVVQSYRNGV</variation>
    <location>
        <begin position="665"/>
        <end position="672"/>
    </location>
</feature>
<feature type="mutagenesis site" description="In ev520; mild uncoordinated phenotype. Causes no axon guidance defects or distal tip cell migrations and gonad morphology defects. Enhances the distal tip cell migration defects of unc-5 ev585, unc-5 e53 or unc-6 ev400 mutants. Suppresses the anterior touch neuron axon guidance defects in an unc-5 over-expression mutant background." evidence="2 3">
    <location>
        <begin position="191"/>
        <end position="672"/>
    </location>
</feature>
<feature type="mutagenesis site" description="In ev529; causes no distal tip cell migrations and gonad morphology defects. Enhances the distal tip cell migration defects of the unc-5 ev585, unc-5 e53 or unc-6 ev400 mutants." evidence="2">
    <location>
        <begin position="630"/>
        <end position="672"/>
    </location>
</feature>
<comment type="function">
    <text evidence="2 3">Together with unc-5, involved in touch neuron axon guidance (PubMed:9473333). During gonad morphogenesis, plays a role in the unc-5-/unc-6-mediated migration of distal tip cells along the body (PubMed:17716643).</text>
</comment>
<comment type="subcellular location">
    <subcellularLocation>
        <location evidence="2">Nucleus</location>
    </subcellularLocation>
</comment>
<comment type="alternative products">
    <event type="alternative splicing"/>
    <isoform>
        <id>A9D2P7-1</id>
        <name evidence="10">d</name>
        <name evidence="4">seu-1A</name>
        <sequence type="displayed"/>
    </isoform>
    <isoform>
        <id>A9D2P7-2</id>
        <name evidence="7">a</name>
        <name evidence="4">seu-1B</name>
        <sequence type="described" ref="VSP_061194 VSP_061195"/>
    </isoform>
    <isoform>
        <id>A9D2P7-3</id>
        <name evidence="8">b</name>
        <sequence type="described" ref="VSP_061193 VSP_061194 VSP_061195"/>
    </isoform>
    <isoform>
        <id>A9D2P7-4</id>
        <name evidence="9">c</name>
        <sequence type="described" ref="VSP_061192 VSP_061194 VSP_061195"/>
    </isoform>
    <isoform>
        <id>A9D2P7-5</id>
        <name evidence="11">e</name>
        <sequence type="described" ref="VSP_061192 VSP_061195"/>
    </isoform>
</comment>
<comment type="tissue specificity">
    <text evidence="2">Highly expressed in intestinal cells, lateral hypodermal (seam) cells, Pn.p ventral hypodermal cells, and spermatheca (PubMed:17716643). Expressed at low levels in the ventral nerve cord (PubMed:17716643).</text>
</comment>
<comment type="developmental stage">
    <text evidence="2">Expressed in all nuclei in the early embryo until the comma stage, and then is expressed in body wall muscle cells and pharynx in the embryo (PubMed:17716643). Expressed in muscle until the late larval stages (PubMed:17716643). In larvae, highly expressed in intestinal cells, lateral hypodermal (seam) cells, Pn.p ventral hypodermal cells, and spermatheca (PubMed:17716643). In L3 stage larvae, expressed at low levels in distal tip cells during the ventral-to-dorsal second and longitudinal third migration phases, but not expressed during the first migration phase (PubMed:17716643). In L4 stage larvae, expressed at low levels in the ventral nerve cord (PubMed:17716643).</text>
</comment>
<sequence length="672" mass="75388">MSSIRNQNDNRRPTFRDHRTPQFSGRGGSGGGGRRLQNPAHYPQRRDMSPIRRSSAISPVRRSQDHRQRSPEVRRHRSPEKESKDAVVTSTGSSRGATSASVTSSSRRHESGERHRETHRREDKEKKPEKSTDRDADRSNNIAARIQAPVVSSSTHHHHSNRHENRKSTAVKRPAADNRPMTYSTDVSVSRHSENRRKSSSDVSRRHGDKEKRDRKREDVKKKSNGERSSSSGRRREEDHKRKSESSRKEKKDEDVKEKVVDENKVEDEAVEMQGLVEVDCCEEEETIEQAKEHGSDEPERPESHQSAHSAAVSNASHHSDSEEELDYEEDDIDVDLDGDIDVETMKMAARGDLKVDDTTDEDEINDVKDETMEEQKEDGEPEKKKPRTSENDDKDKKHHGSSSSNSHRRREDDKDRRQSSDHHKERRRSPATRQRATDHKESRRSEGTSTRVESAASAAGTEIQRIPSLLTMRIAAPPGIKKLETLYHSGSGGSSSSSSHSSEMIIVGETFSNRWCQCSCAHHLPTTSSAAAAAGSLDASPASSSSSSSNSDASVSRIPSLMSLRTPFNNSCLFLAPPPPPSSSSSSKRSHEAAARIRAPSPPRRSFGDRGNRSDEHHGGSRHMDVGPQRRRLQDHRVRDDGRRVSSFEDRKRPERGFQDSGRVSLSLKHL</sequence>
<name>SEU1_CAEEL</name>
<keyword id="KW-0025">Alternative splicing</keyword>
<keyword id="KW-0539">Nucleus</keyword>
<keyword id="KW-1185">Reference proteome</keyword>
<dbReference type="EMBL" id="BX284604">
    <property type="protein sequence ID" value="CCD74152.1"/>
    <property type="molecule type" value="Genomic_DNA"/>
</dbReference>
<dbReference type="EMBL" id="BX284604">
    <property type="protein sequence ID" value="CCD74153.1"/>
    <property type="molecule type" value="Genomic_DNA"/>
</dbReference>
<dbReference type="EMBL" id="BX284604">
    <property type="protein sequence ID" value="CCD74154.1"/>
    <property type="molecule type" value="Genomic_DNA"/>
</dbReference>
<dbReference type="EMBL" id="BX284604">
    <property type="protein sequence ID" value="CCD74193.1"/>
    <property type="molecule type" value="Genomic_DNA"/>
</dbReference>
<dbReference type="EMBL" id="BX284604">
    <property type="protein sequence ID" value="CDK13502.1"/>
    <property type="molecule type" value="Genomic_DNA"/>
</dbReference>
<dbReference type="RefSeq" id="NP_001293775.1">
    <property type="nucleotide sequence ID" value="NM_001306846.1"/>
</dbReference>
<dbReference type="RefSeq" id="NP_001368061.1">
    <molecule id="A9D2P7-4"/>
    <property type="nucleotide sequence ID" value="NM_001380270.1"/>
</dbReference>
<dbReference type="RefSeq" id="NP_001368401.1">
    <molecule id="A9D2P7-5"/>
    <property type="nucleotide sequence ID" value="NM_001380269.2"/>
</dbReference>
<dbReference type="RefSeq" id="NP_500965.1">
    <molecule id="A9D2P7-2"/>
    <property type="nucleotide sequence ID" value="NM_068564.7"/>
</dbReference>
<dbReference type="RefSeq" id="NP_500966.1">
    <molecule id="A9D2P7-3"/>
    <property type="nucleotide sequence ID" value="NM_068565.7"/>
</dbReference>
<dbReference type="RefSeq" id="NP_741420.1">
    <property type="nucleotide sequence ID" value="NM_171358.3"/>
</dbReference>
<dbReference type="RefSeq" id="NP_741421.2">
    <molecule id="A9D2P7-1"/>
    <property type="nucleotide sequence ID" value="NM_171359.5"/>
</dbReference>
<dbReference type="FunCoup" id="A9D2P7">
    <property type="interactions" value="1221"/>
</dbReference>
<dbReference type="STRING" id="6239.Y73B6BL.5d.2"/>
<dbReference type="PaxDb" id="6239-Y73B6BL.5d.2"/>
<dbReference type="EnsemblMetazoa" id="Y73B6BL.5a.1">
    <molecule id="A9D2P7-2"/>
    <property type="protein sequence ID" value="Y73B6BL.5a.1"/>
    <property type="gene ID" value="WBGene00004783"/>
</dbReference>
<dbReference type="EnsemblMetazoa" id="Y73B6BL.5b.1">
    <molecule id="A9D2P7-3"/>
    <property type="protein sequence ID" value="Y73B6BL.5b.1"/>
    <property type="gene ID" value="WBGene00004783"/>
</dbReference>
<dbReference type="EnsemblMetazoa" id="Y73B6BL.5c.1">
    <molecule id="A9D2P7-4"/>
    <property type="protein sequence ID" value="Y73B6BL.5c.1"/>
    <property type="gene ID" value="WBGene00004783"/>
</dbReference>
<dbReference type="EnsemblMetazoa" id="Y73B6BL.5d.1">
    <molecule id="A9D2P7-1"/>
    <property type="protein sequence ID" value="Y73B6BL.5d.1"/>
    <property type="gene ID" value="WBGene00004783"/>
</dbReference>
<dbReference type="EnsemblMetazoa" id="Y73B6BL.5e.1">
    <molecule id="A9D2P7-5"/>
    <property type="protein sequence ID" value="Y73B6BL.5e.1"/>
    <property type="gene ID" value="WBGene00004783"/>
</dbReference>
<dbReference type="GeneID" id="177394"/>
<dbReference type="KEGG" id="cel:CELE_Y73B6BL.5"/>
<dbReference type="UCSC" id="Y73B6BL.5d.1">
    <property type="organism name" value="c. elegans"/>
</dbReference>
<dbReference type="AGR" id="WB:WBGene00004783"/>
<dbReference type="CTD" id="177394"/>
<dbReference type="WormBase" id="Y73B6BL.5a">
    <molecule id="A9D2P7-2"/>
    <property type="protein sequence ID" value="CE29147"/>
    <property type="gene ID" value="WBGene00004783"/>
    <property type="gene designation" value="seu-1"/>
</dbReference>
<dbReference type="WormBase" id="Y73B6BL.5b">
    <molecule id="A9D2P7-3"/>
    <property type="protein sequence ID" value="CE29148"/>
    <property type="gene ID" value="WBGene00004783"/>
    <property type="gene designation" value="seu-1"/>
</dbReference>
<dbReference type="WormBase" id="Y73B6BL.5c">
    <molecule id="A9D2P7-4"/>
    <property type="protein sequence ID" value="CE31129"/>
    <property type="gene ID" value="WBGene00004783"/>
    <property type="gene designation" value="seu-1"/>
</dbReference>
<dbReference type="WormBase" id="Y73B6BL.5d">
    <molecule id="A9D2P7-1"/>
    <property type="protein sequence ID" value="CE41963"/>
    <property type="gene ID" value="WBGene00004783"/>
    <property type="gene designation" value="seu-1"/>
</dbReference>
<dbReference type="WormBase" id="Y73B6BL.5e">
    <molecule id="A9D2P7-5"/>
    <property type="protein sequence ID" value="CE49209"/>
    <property type="gene ID" value="WBGene00004783"/>
    <property type="gene designation" value="seu-1"/>
</dbReference>
<dbReference type="eggNOG" id="ENOG502TGB7">
    <property type="taxonomic scope" value="Eukaryota"/>
</dbReference>
<dbReference type="HOGENOM" id="CLU_028920_0_0_1"/>
<dbReference type="InParanoid" id="A9D2P7"/>
<dbReference type="OMA" id="WCALLAC"/>
<dbReference type="OrthoDB" id="5899973at2759"/>
<dbReference type="PRO" id="PR:A9D2P7"/>
<dbReference type="Proteomes" id="UP000001940">
    <property type="component" value="Chromosome IV"/>
</dbReference>
<dbReference type="Bgee" id="WBGene00004783">
    <property type="expression patterns" value="Expressed in embryo and 3 other cell types or tissues"/>
</dbReference>
<dbReference type="ExpressionAtlas" id="A9D2P7">
    <property type="expression patterns" value="baseline and differential"/>
</dbReference>
<dbReference type="GO" id="GO:0005634">
    <property type="term" value="C:nucleus"/>
    <property type="evidence" value="ECO:0000314"/>
    <property type="project" value="WormBase"/>
</dbReference>
<dbReference type="GO" id="GO:0033563">
    <property type="term" value="P:dorsal/ventral axon guidance"/>
    <property type="evidence" value="ECO:0000316"/>
    <property type="project" value="WormBase"/>
</dbReference>
<dbReference type="GO" id="GO:0040011">
    <property type="term" value="P:locomotion"/>
    <property type="evidence" value="ECO:0000315"/>
    <property type="project" value="WormBase"/>
</dbReference>
<proteinExistence type="evidence at protein level"/>
<organism evidence="6">
    <name type="scientific">Caenorhabditis elegans</name>
    <dbReference type="NCBI Taxonomy" id="6239"/>
    <lineage>
        <taxon>Eukaryota</taxon>
        <taxon>Metazoa</taxon>
        <taxon>Ecdysozoa</taxon>
        <taxon>Nematoda</taxon>
        <taxon>Chromadorea</taxon>
        <taxon>Rhabditida</taxon>
        <taxon>Rhabditina</taxon>
        <taxon>Rhabditomorpha</taxon>
        <taxon>Rhabditoidea</taxon>
        <taxon>Rhabditidae</taxon>
        <taxon>Peloderinae</taxon>
        <taxon>Caenorhabditis</taxon>
    </lineage>
</organism>
<gene>
    <name evidence="10" type="primary">seu-1</name>
    <name evidence="10" type="ORF">Y73B6BL.5</name>
</gene>